<comment type="function">
    <text evidence="4 5 6">Delays the mitotic G2/M transition by promoting nuclear exclusion of cdc25 (PubMed:12080074, PubMed:15629716). During osmotic stress, inhibits the G2/M transition in a sty1 stress-activated MAPK pathway-dependent manner (PubMed:12080074, PubMed:12589433, PubMed:15629716).</text>
</comment>
<comment type="catalytic activity">
    <reaction evidence="6">
        <text>L-seryl-[protein] + ATP = O-phospho-L-seryl-[protein] + ADP + H(+)</text>
        <dbReference type="Rhea" id="RHEA:17989"/>
        <dbReference type="Rhea" id="RHEA-COMP:9863"/>
        <dbReference type="Rhea" id="RHEA-COMP:11604"/>
        <dbReference type="ChEBI" id="CHEBI:15378"/>
        <dbReference type="ChEBI" id="CHEBI:29999"/>
        <dbReference type="ChEBI" id="CHEBI:30616"/>
        <dbReference type="ChEBI" id="CHEBI:83421"/>
        <dbReference type="ChEBI" id="CHEBI:456216"/>
        <dbReference type="EC" id="2.7.11.1"/>
    </reaction>
</comment>
<comment type="catalytic activity">
    <reaction evidence="6">
        <text>L-threonyl-[protein] + ATP = O-phospho-L-threonyl-[protein] + ADP + H(+)</text>
        <dbReference type="Rhea" id="RHEA:46608"/>
        <dbReference type="Rhea" id="RHEA-COMP:11060"/>
        <dbReference type="Rhea" id="RHEA-COMP:11605"/>
        <dbReference type="ChEBI" id="CHEBI:15378"/>
        <dbReference type="ChEBI" id="CHEBI:30013"/>
        <dbReference type="ChEBI" id="CHEBI:30616"/>
        <dbReference type="ChEBI" id="CHEBI:61977"/>
        <dbReference type="ChEBI" id="CHEBI:456216"/>
        <dbReference type="EC" id="2.7.11.1"/>
    </reaction>
</comment>
<comment type="cofactor">
    <cofactor evidence="6">
        <name>Mg(2+)</name>
        <dbReference type="ChEBI" id="CHEBI:18420"/>
    </cofactor>
</comment>
<comment type="interaction">
    <interactant intactId="EBI-3648527">
        <id>O94547</id>
    </interactant>
    <interactant intactId="EBI-3648525">
        <id>Q09892</id>
        <label>sty1</label>
    </interactant>
    <organismsDiffer>false</organismsDiffer>
    <experiments>3</experiments>
</comment>
<comment type="subcellular location">
    <subcellularLocation>
        <location evidence="4 5">Cytoplasm</location>
    </subcellularLocation>
    <subcellularLocation>
        <location evidence="4 6">Nucleus</location>
        <location evidence="4 6">Nucleolus</location>
    </subcellularLocation>
    <subcellularLocation>
        <location evidence="5">Spore core</location>
    </subcellularLocation>
    <text evidence="4">Translocates from the cytoplasm to the nucleus during environmental stress in a sty1-dependent manner.</text>
</comment>
<comment type="induction">
    <text evidence="4">Induced during environmental stress.</text>
</comment>
<comment type="PTM">
    <text evidence="4 5">Phosphorylated by sty1.</text>
</comment>
<comment type="disruption phenotype">
    <text evidence="6">Decreases the interaction between rad24 and cdc25 (PubMed:15629716). Small cells at septation (PubMed:15629716). Sensitive to osmotic stress (PubMed:15629716).</text>
</comment>
<comment type="similarity">
    <text evidence="9">Belongs to the protein kinase superfamily. CAMK Ser/Thr protein kinase family. CaMK subfamily.</text>
</comment>
<proteinExistence type="evidence at protein level"/>
<name>SRK1_SCHPO</name>
<keyword id="KW-0067">ATP-binding</keyword>
<keyword id="KW-0963">Cytoplasm</keyword>
<keyword id="KW-0418">Kinase</keyword>
<keyword id="KW-0469">Meiosis</keyword>
<keyword id="KW-0547">Nucleotide-binding</keyword>
<keyword id="KW-0539">Nucleus</keyword>
<keyword id="KW-0597">Phosphoprotein</keyword>
<keyword id="KW-1185">Reference proteome</keyword>
<keyword id="KW-0723">Serine/threonine-protein kinase</keyword>
<keyword id="KW-0808">Transferase</keyword>
<feature type="chain" id="PRO_0000086680" description="Serine/threonine-protein kinase srk1">
    <location>
        <begin position="1"/>
        <end position="580"/>
    </location>
</feature>
<feature type="domain" description="Protein kinase" evidence="1">
    <location>
        <begin position="124"/>
        <end position="421"/>
    </location>
</feature>
<feature type="region of interest" description="Disordered" evidence="3">
    <location>
        <begin position="51"/>
        <end position="91"/>
    </location>
</feature>
<feature type="region of interest" description="Disordered" evidence="3">
    <location>
        <begin position="530"/>
        <end position="580"/>
    </location>
</feature>
<feature type="compositionally biased region" description="Polar residues" evidence="3">
    <location>
        <begin position="51"/>
        <end position="61"/>
    </location>
</feature>
<feature type="compositionally biased region" description="Low complexity" evidence="3">
    <location>
        <begin position="537"/>
        <end position="554"/>
    </location>
</feature>
<feature type="active site" description="Proton acceptor" evidence="1 2">
    <location>
        <position position="257"/>
    </location>
</feature>
<feature type="binding site" evidence="1">
    <location>
        <begin position="130"/>
        <end position="138"/>
    </location>
    <ligand>
        <name>ATP</name>
        <dbReference type="ChEBI" id="CHEBI:30616"/>
    </ligand>
</feature>
<feature type="binding site" evidence="1">
    <location>
        <position position="153"/>
    </location>
    <ligand>
        <name>ATP</name>
        <dbReference type="ChEBI" id="CHEBI:30616"/>
    </ligand>
</feature>
<feature type="mutagenesis site" description="Abolishes kinase activity." evidence="6">
    <original>K</original>
    <variation>A</variation>
    <location>
        <position position="153"/>
    </location>
</feature>
<protein>
    <recommendedName>
        <fullName>Serine/threonine-protein kinase srk1</fullName>
        <ecNumber evidence="6">2.7.11.1</ecNumber>
    </recommendedName>
    <alternativeName>
        <fullName>Sty1-regulated kinase 1</fullName>
    </alternativeName>
</protein>
<dbReference type="EC" id="2.7.11.1" evidence="6"/>
<dbReference type="EMBL" id="CU329672">
    <property type="protein sequence ID" value="CAA22861.1"/>
    <property type="molecule type" value="Genomic_DNA"/>
</dbReference>
<dbReference type="PIR" id="T40939">
    <property type="entry name" value="T40939"/>
</dbReference>
<dbReference type="RefSeq" id="NP_588136.1">
    <property type="nucleotide sequence ID" value="NM_001023126.2"/>
</dbReference>
<dbReference type="SMR" id="O94547"/>
<dbReference type="BioGRID" id="275600">
    <property type="interactions" value="40"/>
</dbReference>
<dbReference type="FunCoup" id="O94547">
    <property type="interactions" value="472"/>
</dbReference>
<dbReference type="IntAct" id="O94547">
    <property type="interactions" value="1"/>
</dbReference>
<dbReference type="STRING" id="284812.O94547"/>
<dbReference type="iPTMnet" id="O94547"/>
<dbReference type="PaxDb" id="4896-SPCC1322.08.1"/>
<dbReference type="EnsemblFungi" id="SPCC1322.08.1">
    <property type="protein sequence ID" value="SPCC1322.08.1:pep"/>
    <property type="gene ID" value="SPCC1322.08"/>
</dbReference>
<dbReference type="GeneID" id="2539027"/>
<dbReference type="KEGG" id="spo:2539027"/>
<dbReference type="PomBase" id="SPCC1322.08">
    <property type="gene designation" value="srk1"/>
</dbReference>
<dbReference type="VEuPathDB" id="FungiDB:SPCC1322.08"/>
<dbReference type="eggNOG" id="KOG0032">
    <property type="taxonomic scope" value="Eukaryota"/>
</dbReference>
<dbReference type="HOGENOM" id="CLU_006421_1_0_1"/>
<dbReference type="InParanoid" id="O94547"/>
<dbReference type="OMA" id="KQYYYIV"/>
<dbReference type="PhylomeDB" id="O94547"/>
<dbReference type="PRO" id="PR:O94547"/>
<dbReference type="Proteomes" id="UP000002485">
    <property type="component" value="Chromosome III"/>
</dbReference>
<dbReference type="GO" id="GO:0042764">
    <property type="term" value="C:ascospore-type prospore"/>
    <property type="evidence" value="ECO:0000314"/>
    <property type="project" value="PomBase"/>
</dbReference>
<dbReference type="GO" id="GO:0005737">
    <property type="term" value="C:cytoplasm"/>
    <property type="evidence" value="ECO:0000314"/>
    <property type="project" value="PomBase"/>
</dbReference>
<dbReference type="GO" id="GO:0005730">
    <property type="term" value="C:nucleolus"/>
    <property type="evidence" value="ECO:0000314"/>
    <property type="project" value="PomBase"/>
</dbReference>
<dbReference type="GO" id="GO:0005634">
    <property type="term" value="C:nucleus"/>
    <property type="evidence" value="ECO:0000314"/>
    <property type="project" value="PomBase"/>
</dbReference>
<dbReference type="GO" id="GO:0005524">
    <property type="term" value="F:ATP binding"/>
    <property type="evidence" value="ECO:0000255"/>
    <property type="project" value="PomBase"/>
</dbReference>
<dbReference type="GO" id="GO:0106310">
    <property type="term" value="F:protein serine kinase activity"/>
    <property type="evidence" value="ECO:0007669"/>
    <property type="project" value="RHEA"/>
</dbReference>
<dbReference type="GO" id="GO:0004674">
    <property type="term" value="F:protein serine/threonine kinase activity"/>
    <property type="evidence" value="ECO:0000314"/>
    <property type="project" value="PomBase"/>
</dbReference>
<dbReference type="GO" id="GO:0071470">
    <property type="term" value="P:cellular response to osmotic stress"/>
    <property type="evidence" value="ECO:0000315"/>
    <property type="project" value="PomBase"/>
</dbReference>
<dbReference type="GO" id="GO:0034599">
    <property type="term" value="P:cellular response to oxidative stress"/>
    <property type="evidence" value="ECO:0000315"/>
    <property type="project" value="PomBase"/>
</dbReference>
<dbReference type="GO" id="GO:0051321">
    <property type="term" value="P:meiotic cell cycle"/>
    <property type="evidence" value="ECO:0007669"/>
    <property type="project" value="UniProtKB-KW"/>
</dbReference>
<dbReference type="GO" id="GO:0044773">
    <property type="term" value="P:mitotic DNA damage checkpoint signaling"/>
    <property type="evidence" value="ECO:0000318"/>
    <property type="project" value="GO_Central"/>
</dbReference>
<dbReference type="GO" id="GO:0010972">
    <property type="term" value="P:negative regulation of G2/M transition of mitotic cell cycle"/>
    <property type="evidence" value="ECO:0000315"/>
    <property type="project" value="PomBase"/>
</dbReference>
<dbReference type="GO" id="GO:0010515">
    <property type="term" value="P:negative regulation of induction of conjugation with cellular fusion"/>
    <property type="evidence" value="ECO:0000315"/>
    <property type="project" value="PomBase"/>
</dbReference>
<dbReference type="GO" id="GO:1900181">
    <property type="term" value="P:negative regulation of protein localization to nucleus"/>
    <property type="evidence" value="ECO:0000315"/>
    <property type="project" value="PomBase"/>
</dbReference>
<dbReference type="CDD" id="cd14096">
    <property type="entry name" value="STKc_RCK1-like"/>
    <property type="match status" value="1"/>
</dbReference>
<dbReference type="FunFam" id="3.30.200.20:FF:000042">
    <property type="entry name" value="Aurora kinase A"/>
    <property type="match status" value="1"/>
</dbReference>
<dbReference type="Gene3D" id="3.30.200.20">
    <property type="entry name" value="Phosphorylase Kinase, domain 1"/>
    <property type="match status" value="1"/>
</dbReference>
<dbReference type="Gene3D" id="1.10.510.10">
    <property type="entry name" value="Transferase(Phosphotransferase) domain 1"/>
    <property type="match status" value="1"/>
</dbReference>
<dbReference type="InterPro" id="IPR011009">
    <property type="entry name" value="Kinase-like_dom_sf"/>
</dbReference>
<dbReference type="InterPro" id="IPR000719">
    <property type="entry name" value="Prot_kinase_dom"/>
</dbReference>
<dbReference type="InterPro" id="IPR008271">
    <property type="entry name" value="Ser/Thr_kinase_AS"/>
</dbReference>
<dbReference type="PANTHER" id="PTHR24347">
    <property type="entry name" value="SERINE/THREONINE-PROTEIN KINASE"/>
    <property type="match status" value="1"/>
</dbReference>
<dbReference type="Pfam" id="PF00069">
    <property type="entry name" value="Pkinase"/>
    <property type="match status" value="1"/>
</dbReference>
<dbReference type="SMART" id="SM00220">
    <property type="entry name" value="S_TKc"/>
    <property type="match status" value="1"/>
</dbReference>
<dbReference type="SUPFAM" id="SSF56112">
    <property type="entry name" value="Protein kinase-like (PK-like)"/>
    <property type="match status" value="1"/>
</dbReference>
<dbReference type="PROSITE" id="PS50011">
    <property type="entry name" value="PROTEIN_KINASE_DOM"/>
    <property type="match status" value="1"/>
</dbReference>
<dbReference type="PROSITE" id="PS00108">
    <property type="entry name" value="PROTEIN_KINASE_ST"/>
    <property type="match status" value="1"/>
</dbReference>
<accession>O94547</accession>
<sequence>MRFKSIQQNIEDEGKVNVREVNPDSYAERDHGYTAGIFSDAEENFGITQQVADSTQNPTSKPKSRHAHFHETVHENPSEYSRSKCKQPTNEKEYDKAIEALVAKAIVEEHSGQQFPVYKGLEQYTLLQKMGDGAFSNVYKAIHNRTGEKVAIKVVQRAQPNTDPRDPRKRQGVESHNILKEVQIMRRVKHPNIIQLLEFIQTPEYYYLVLELADGGELFHQIVRLTYFSEDLSRHVITQVAHAIRYLHEDCGVVHRDIKPENLLFDSIDFVPSRVRKYRAGDDPDKVDEGEFIPGVGAGTIGRIRLADFGLSKVVWDSHTQTPCGTMGYTAPEIVRDERYSKGVDMWALGCVLYTILCGFPPFYDESISLLTKKVSRGEYSFLSPWWDDISKSAKDLISHLLTVDPESRYDIHQFLAHPWISGSREPTFPATDAPNTAQRENPFTYDFLEPEDVAAAGSAARTPGVNSLREVFNISYAAHRMEQEKIRKRGQRGNQGIMNFMGDMDDLMEENDDYDDGTKSVEHSMKRVNLSGENDPSLASRQPAQSQQQSSQRSRNKFKGFQLNLSKATLYNRRHRQKV</sequence>
<gene>
    <name evidence="7 10" type="primary">srk1</name>
    <name evidence="8" type="synonym">mkp1</name>
    <name evidence="10" type="ORF">SPCC1322.08</name>
</gene>
<organism>
    <name type="scientific">Schizosaccharomyces pombe (strain 972 / ATCC 24843)</name>
    <name type="common">Fission yeast</name>
    <dbReference type="NCBI Taxonomy" id="284812"/>
    <lineage>
        <taxon>Eukaryota</taxon>
        <taxon>Fungi</taxon>
        <taxon>Dikarya</taxon>
        <taxon>Ascomycota</taxon>
        <taxon>Taphrinomycotina</taxon>
        <taxon>Schizosaccharomycetes</taxon>
        <taxon>Schizosaccharomycetales</taxon>
        <taxon>Schizosaccharomycetaceae</taxon>
        <taxon>Schizosaccharomyces</taxon>
    </lineage>
</organism>
<evidence type="ECO:0000255" key="1">
    <source>
        <dbReference type="PROSITE-ProRule" id="PRU00159"/>
    </source>
</evidence>
<evidence type="ECO:0000255" key="2">
    <source>
        <dbReference type="PROSITE-ProRule" id="PRU10027"/>
    </source>
</evidence>
<evidence type="ECO:0000256" key="3">
    <source>
        <dbReference type="SAM" id="MobiDB-lite"/>
    </source>
</evidence>
<evidence type="ECO:0000269" key="4">
    <source>
    </source>
</evidence>
<evidence type="ECO:0000269" key="5">
    <source>
    </source>
</evidence>
<evidence type="ECO:0000269" key="6">
    <source>
    </source>
</evidence>
<evidence type="ECO:0000303" key="7">
    <source>
    </source>
</evidence>
<evidence type="ECO:0000303" key="8">
    <source>
    </source>
</evidence>
<evidence type="ECO:0000305" key="9"/>
<evidence type="ECO:0000312" key="10">
    <source>
        <dbReference type="PomBase" id="SPCC1322.08"/>
    </source>
</evidence>
<reference key="1">
    <citation type="journal article" date="2002" name="J. Biol. Chem.">
        <title>The Srk1 protein kinase is a target for the Sty1 stress-activated MAPK in fission yeast.</title>
        <authorList>
            <person name="Smith D.A."/>
            <person name="Toone W.M."/>
            <person name="Chen D."/>
            <person name="Baehler J."/>
            <person name="Jones N."/>
            <person name="Morgan B.A."/>
            <person name="Quinn J."/>
        </authorList>
    </citation>
    <scope>NUCLEOTIDE SEQUENCE [GENOMIC DNA]</scope>
    <scope>FUNCTION</scope>
    <scope>SUBCELLULAR LOCATION</scope>
    <scope>INDUCTION</scope>
    <scope>PHOSPHORYLATION</scope>
</reference>
<reference key="2">
    <citation type="journal article" date="2002" name="Nature">
        <title>The genome sequence of Schizosaccharomyces pombe.</title>
        <authorList>
            <person name="Wood V."/>
            <person name="Gwilliam R."/>
            <person name="Rajandream M.A."/>
            <person name="Lyne M.H."/>
            <person name="Lyne R."/>
            <person name="Stewart A."/>
            <person name="Sgouros J.G."/>
            <person name="Peat N."/>
            <person name="Hayles J."/>
            <person name="Baker S.G."/>
            <person name="Basham D."/>
            <person name="Bowman S."/>
            <person name="Brooks K."/>
            <person name="Brown D."/>
            <person name="Brown S."/>
            <person name="Chillingworth T."/>
            <person name="Churcher C.M."/>
            <person name="Collins M."/>
            <person name="Connor R."/>
            <person name="Cronin A."/>
            <person name="Davis P."/>
            <person name="Feltwell T."/>
            <person name="Fraser A."/>
            <person name="Gentles S."/>
            <person name="Goble A."/>
            <person name="Hamlin N."/>
            <person name="Harris D.E."/>
            <person name="Hidalgo J."/>
            <person name="Hodgson G."/>
            <person name="Holroyd S."/>
            <person name="Hornsby T."/>
            <person name="Howarth S."/>
            <person name="Huckle E.J."/>
            <person name="Hunt S."/>
            <person name="Jagels K."/>
            <person name="James K.D."/>
            <person name="Jones L."/>
            <person name="Jones M."/>
            <person name="Leather S."/>
            <person name="McDonald S."/>
            <person name="McLean J."/>
            <person name="Mooney P."/>
            <person name="Moule S."/>
            <person name="Mungall K.L."/>
            <person name="Murphy L.D."/>
            <person name="Niblett D."/>
            <person name="Odell C."/>
            <person name="Oliver K."/>
            <person name="O'Neil S."/>
            <person name="Pearson D."/>
            <person name="Quail M.A."/>
            <person name="Rabbinowitsch E."/>
            <person name="Rutherford K.M."/>
            <person name="Rutter S."/>
            <person name="Saunders D."/>
            <person name="Seeger K."/>
            <person name="Sharp S."/>
            <person name="Skelton J."/>
            <person name="Simmonds M.N."/>
            <person name="Squares R."/>
            <person name="Squares S."/>
            <person name="Stevens K."/>
            <person name="Taylor K."/>
            <person name="Taylor R.G."/>
            <person name="Tivey A."/>
            <person name="Walsh S.V."/>
            <person name="Warren T."/>
            <person name="Whitehead S."/>
            <person name="Woodward J.R."/>
            <person name="Volckaert G."/>
            <person name="Aert R."/>
            <person name="Robben J."/>
            <person name="Grymonprez B."/>
            <person name="Weltjens I."/>
            <person name="Vanstreels E."/>
            <person name="Rieger M."/>
            <person name="Schaefer M."/>
            <person name="Mueller-Auer S."/>
            <person name="Gabel C."/>
            <person name="Fuchs M."/>
            <person name="Duesterhoeft A."/>
            <person name="Fritzc C."/>
            <person name="Holzer E."/>
            <person name="Moestl D."/>
            <person name="Hilbert H."/>
            <person name="Borzym K."/>
            <person name="Langer I."/>
            <person name="Beck A."/>
            <person name="Lehrach H."/>
            <person name="Reinhardt R."/>
            <person name="Pohl T.M."/>
            <person name="Eger P."/>
            <person name="Zimmermann W."/>
            <person name="Wedler H."/>
            <person name="Wambutt R."/>
            <person name="Purnelle B."/>
            <person name="Goffeau A."/>
            <person name="Cadieu E."/>
            <person name="Dreano S."/>
            <person name="Gloux S."/>
            <person name="Lelaure V."/>
            <person name="Mottier S."/>
            <person name="Galibert F."/>
            <person name="Aves S.J."/>
            <person name="Xiang Z."/>
            <person name="Hunt C."/>
            <person name="Moore K."/>
            <person name="Hurst S.M."/>
            <person name="Lucas M."/>
            <person name="Rochet M."/>
            <person name="Gaillardin C."/>
            <person name="Tallada V.A."/>
            <person name="Garzon A."/>
            <person name="Thode G."/>
            <person name="Daga R.R."/>
            <person name="Cruzado L."/>
            <person name="Jimenez J."/>
            <person name="Sanchez M."/>
            <person name="del Rey F."/>
            <person name="Benito J."/>
            <person name="Dominguez A."/>
            <person name="Revuelta J.L."/>
            <person name="Moreno S."/>
            <person name="Armstrong J."/>
            <person name="Forsburg S.L."/>
            <person name="Cerutti L."/>
            <person name="Lowe T."/>
            <person name="McCombie W.R."/>
            <person name="Paulsen I."/>
            <person name="Potashkin J."/>
            <person name="Shpakovski G.V."/>
            <person name="Ussery D."/>
            <person name="Barrell B.G."/>
            <person name="Nurse P."/>
        </authorList>
    </citation>
    <scope>NUCLEOTIDE SEQUENCE [LARGE SCALE GENOMIC DNA]</scope>
    <source>
        <strain>972 / ATCC 24843</strain>
    </source>
</reference>
<reference key="3">
    <citation type="journal article" date="2003" name="Mol. Genet. Genomics">
        <title>Mkp1 and Mkp2, two MAPKAP-kinase homologues in Schizosaccharomyces pombe, interact with the MAP kinase Sty1.</title>
        <authorList>
            <person name="Asp E."/>
            <person name="Sunnerhagen P."/>
        </authorList>
    </citation>
    <scope>FUNCTION</scope>
    <scope>SUBCELLULAR LOCATION</scope>
    <scope>PHOSPHORYLATION</scope>
    <scope>INTERACTION WITH STY1</scope>
</reference>
<reference key="4">
    <citation type="journal article" date="2005" name="Mol. Cell">
        <title>Inactivation of the Cdc25 phosphatase by the stress-activated Srk1 kinase in fission yeast.</title>
        <authorList>
            <person name="Lopez-Aviles S."/>
            <person name="Grande M."/>
            <person name="Gonzalez M."/>
            <person name="Helgesen A.L."/>
            <person name="Alemany V."/>
            <person name="Sanchez-Piris M."/>
            <person name="Bachs O."/>
            <person name="Millar J.B."/>
            <person name="Aligue R."/>
        </authorList>
    </citation>
    <scope>FUNCTION</scope>
    <scope>CATALYTIC ACTIVITY</scope>
    <scope>COFACTOR</scope>
    <scope>SUBCELLULAR LOCATION</scope>
    <scope>DISRUPTION PHENOTYPE</scope>
    <scope>MUTAGENESIS OF LYS-153</scope>
</reference>